<name>RIOX2_MOUSE</name>
<proteinExistence type="evidence at protein level"/>
<organism>
    <name type="scientific">Mus musculus</name>
    <name type="common">Mouse</name>
    <dbReference type="NCBI Taxonomy" id="10090"/>
    <lineage>
        <taxon>Eukaryota</taxon>
        <taxon>Metazoa</taxon>
        <taxon>Chordata</taxon>
        <taxon>Craniata</taxon>
        <taxon>Vertebrata</taxon>
        <taxon>Euteleostomi</taxon>
        <taxon>Mammalia</taxon>
        <taxon>Eutheria</taxon>
        <taxon>Euarchontoglires</taxon>
        <taxon>Glires</taxon>
        <taxon>Rodentia</taxon>
        <taxon>Myomorpha</taxon>
        <taxon>Muroidea</taxon>
        <taxon>Muridae</taxon>
        <taxon>Murinae</taxon>
        <taxon>Mus</taxon>
        <taxon>Mus</taxon>
    </lineage>
</organism>
<sequence length="465" mass="53517">MPKKVQPTGDENEEASVPCKRVKEELPETLSVLNFDSPSSFFESLISPIKVETFFKEFWEQKPLLIQRDDPVLAKYYQSLFSLSDLKRLCKKGVYYGRDVNVCRSISGKKKVLNKDGRAHFLQLRKDFDQKRATIQFHQPQRYKDELWRIQEKLECYFGSLVGSNVYMTPAGSQGLPPHYDDVEVFILQLEGTKHWRLYSPTVPLAHEYSVESEDRIGTPTHDFLLKPGDLLYFPRGTIHQAETPSGLAYSIHLTISTYQNNSWGDCLLDSISGFVFDIAKEDVALRSGMPRRMLLNVETPADVTRKLSGFLRTLADQLEGREELLSSDMKKDFVKHRLPPFFEGNGTETMDPGKQLPRLDNIIRLQFKDHIVLTVGPDKNPFDEAQQKVVYIYHSLKNVRQMHMIGEEEESEIFGLRFPLSHVDALKQIWCGSPIRVKDLKLDTDEEKENLALSLWSESLIQVL</sequence>
<comment type="function">
    <text evidence="1 4">Oxygenase that can act as both a histone lysine demethylase and a ribosomal histidine hydroxylase. Is involved in the demethylation of trimethylated 'Lys-9' on histone H3 (H3K9me3), leading to an increase in ribosomal RNA expression. Also catalyzes the hydroxylation of 60S ribosomal protein L27a on 'His-39' (By similarity). May play an important role in cell growth and survival. May be involved in ribosome biogenesis, most likely during the assembly process of pre-ribosomal particles.</text>
</comment>
<comment type="catalytic activity">
    <reaction evidence="2">
        <text>L-histidyl-[ribosomal protein uL15] + 2-oxoglutarate + O2 = (3S)-3-hydroxy-L-histidyl-[ribosomal protein uL15] + succinate + CO2</text>
        <dbReference type="Rhea" id="RHEA:54024"/>
        <dbReference type="Rhea" id="RHEA-COMP:13760"/>
        <dbReference type="Rhea" id="RHEA-COMP:13761"/>
        <dbReference type="ChEBI" id="CHEBI:15379"/>
        <dbReference type="ChEBI" id="CHEBI:16526"/>
        <dbReference type="ChEBI" id="CHEBI:16810"/>
        <dbReference type="ChEBI" id="CHEBI:29979"/>
        <dbReference type="ChEBI" id="CHEBI:30031"/>
        <dbReference type="ChEBI" id="CHEBI:138021"/>
    </reaction>
</comment>
<comment type="catalytic activity">
    <reaction evidence="2">
        <text>L-histidyl-[protein] + 2-oxoglutarate + O2 = (3S)-3-hydroxy-L-histidyl-[protein] + succinate + CO2</text>
        <dbReference type="Rhea" id="RHEA:54256"/>
        <dbReference type="Rhea" id="RHEA-COMP:9745"/>
        <dbReference type="Rhea" id="RHEA-COMP:13840"/>
        <dbReference type="ChEBI" id="CHEBI:15379"/>
        <dbReference type="ChEBI" id="CHEBI:16526"/>
        <dbReference type="ChEBI" id="CHEBI:16810"/>
        <dbReference type="ChEBI" id="CHEBI:29979"/>
        <dbReference type="ChEBI" id="CHEBI:30031"/>
        <dbReference type="ChEBI" id="CHEBI:138021"/>
        <dbReference type="EC" id="1.14.11.79"/>
    </reaction>
</comment>
<comment type="cofactor">
    <cofactor evidence="1">
        <name>Fe(2+)</name>
        <dbReference type="ChEBI" id="CHEBI:29033"/>
    </cofactor>
    <text evidence="1">Binds 1 Fe(2+) ion per subunit.</text>
</comment>
<comment type="subcellular location">
    <subcellularLocation>
        <location evidence="4">Nucleus</location>
    </subcellularLocation>
    <subcellularLocation>
        <location evidence="4">Nucleus</location>
        <location evidence="4">Nucleolus</location>
    </subcellularLocation>
</comment>
<comment type="tissue specificity">
    <text evidence="4">Predominantly expressed in testis. Expressed at high levels in spleen, thymus, and colon, but barely detectable in brain, skeletal muscle, and seminal vesicle (at protein level).</text>
</comment>
<comment type="developmental stage">
    <text evidence="4">In testis, expressed in the nuclei of spermatogonia at all stages of the seminiferous epithelial cycle, and in meiotic prophase cells such as preleptotene, leptotene and zygotene, and weakly in early pachytene spermatocytes, but is absent in late pachytene spermatocytes, spermatids and mature sperm (at protein level).</text>
</comment>
<comment type="induction">
    <text evidence="4">Up-regulated in experimentally-induced cryptorchid testis.</text>
</comment>
<comment type="similarity">
    <text evidence="6">Belongs to the ROX family. MINA53 subfamily.</text>
</comment>
<dbReference type="EC" id="1.14.11.79" evidence="2"/>
<dbReference type="EMBL" id="AB177385">
    <property type="protein sequence ID" value="BAD60965.1"/>
    <property type="molecule type" value="mRNA"/>
</dbReference>
<dbReference type="EMBL" id="AK007810">
    <property type="protein sequence ID" value="BAB25275.1"/>
    <property type="molecule type" value="mRNA"/>
</dbReference>
<dbReference type="EMBL" id="AK013451">
    <property type="protein sequence ID" value="BAB28860.1"/>
    <property type="molecule type" value="mRNA"/>
</dbReference>
<dbReference type="EMBL" id="AK031671">
    <property type="protein sequence ID" value="BAC27503.1"/>
    <property type="molecule type" value="mRNA"/>
</dbReference>
<dbReference type="EMBL" id="BC023462">
    <property type="protein sequence ID" value="AAH23462.1"/>
    <property type="molecule type" value="mRNA"/>
</dbReference>
<dbReference type="EMBL" id="BC025109">
    <property type="protein sequence ID" value="AAH25109.1"/>
    <property type="molecule type" value="mRNA"/>
</dbReference>
<dbReference type="EMBL" id="BC058242">
    <property type="protein sequence ID" value="AAH58242.1"/>
    <property type="molecule type" value="mRNA"/>
</dbReference>
<dbReference type="CCDS" id="CCDS28257.1"/>
<dbReference type="RefSeq" id="NP_080186.3">
    <property type="nucleotide sequence ID" value="NM_025910.3"/>
</dbReference>
<dbReference type="RefSeq" id="XP_006522542.1">
    <property type="nucleotide sequence ID" value="XM_006522479.5"/>
</dbReference>
<dbReference type="SMR" id="Q8CD15"/>
<dbReference type="BioGRID" id="211876">
    <property type="interactions" value="1"/>
</dbReference>
<dbReference type="FunCoup" id="Q8CD15">
    <property type="interactions" value="1757"/>
</dbReference>
<dbReference type="STRING" id="10090.ENSMUSP00000125297"/>
<dbReference type="iPTMnet" id="Q8CD15"/>
<dbReference type="PhosphoSitePlus" id="Q8CD15"/>
<dbReference type="PaxDb" id="10090-ENSMUSP00000023407"/>
<dbReference type="PeptideAtlas" id="Q8CD15"/>
<dbReference type="ProteomicsDB" id="253245"/>
<dbReference type="Antibodypedia" id="2005">
    <property type="antibodies" value="382 antibodies from 37 providers"/>
</dbReference>
<dbReference type="DNASU" id="67014"/>
<dbReference type="Ensembl" id="ENSMUST00000023407.12">
    <property type="protein sequence ID" value="ENSMUSP00000023407.6"/>
    <property type="gene ID" value="ENSMUSG00000022724.16"/>
</dbReference>
<dbReference type="Ensembl" id="ENSMUST00000160571.2">
    <property type="protein sequence ID" value="ENSMUSP00000125297.2"/>
    <property type="gene ID" value="ENSMUSG00000022724.16"/>
</dbReference>
<dbReference type="GeneID" id="67014"/>
<dbReference type="KEGG" id="mmu:67014"/>
<dbReference type="UCSC" id="uc007zph.2">
    <property type="organism name" value="mouse"/>
</dbReference>
<dbReference type="AGR" id="MGI:1914264"/>
<dbReference type="CTD" id="84864"/>
<dbReference type="MGI" id="MGI:1914264">
    <property type="gene designation" value="Riox2"/>
</dbReference>
<dbReference type="VEuPathDB" id="HostDB:ENSMUSG00000022724"/>
<dbReference type="eggNOG" id="KOG3706">
    <property type="taxonomic scope" value="Eukaryota"/>
</dbReference>
<dbReference type="GeneTree" id="ENSGT00390000000083"/>
<dbReference type="HOGENOM" id="CLU_013645_0_1_1"/>
<dbReference type="InParanoid" id="Q8CD15"/>
<dbReference type="OMA" id="IRREMVY"/>
<dbReference type="OrthoDB" id="425950at2759"/>
<dbReference type="PhylomeDB" id="Q8CD15"/>
<dbReference type="TreeFam" id="TF318659"/>
<dbReference type="Reactome" id="R-MMU-3214842">
    <property type="pathway name" value="HDMs demethylate histones"/>
</dbReference>
<dbReference type="Reactome" id="R-MMU-9629569">
    <property type="pathway name" value="Protein hydroxylation"/>
</dbReference>
<dbReference type="BioGRID-ORCS" id="67014">
    <property type="hits" value="4 hits in 82 CRISPR screens"/>
</dbReference>
<dbReference type="ChiTaRS" id="Mina">
    <property type="organism name" value="mouse"/>
</dbReference>
<dbReference type="PRO" id="PR:Q8CD15"/>
<dbReference type="Proteomes" id="UP000000589">
    <property type="component" value="Chromosome 16"/>
</dbReference>
<dbReference type="RNAct" id="Q8CD15">
    <property type="molecule type" value="protein"/>
</dbReference>
<dbReference type="Bgee" id="ENSMUSG00000022724">
    <property type="expression patterns" value="Expressed in otic placode and 258 other cell types or tissues"/>
</dbReference>
<dbReference type="ExpressionAtlas" id="Q8CD15">
    <property type="expression patterns" value="baseline and differential"/>
</dbReference>
<dbReference type="GO" id="GO:0005829">
    <property type="term" value="C:cytosol"/>
    <property type="evidence" value="ECO:0000314"/>
    <property type="project" value="MGI"/>
</dbReference>
<dbReference type="GO" id="GO:0005730">
    <property type="term" value="C:nucleolus"/>
    <property type="evidence" value="ECO:0000266"/>
    <property type="project" value="MGI"/>
</dbReference>
<dbReference type="GO" id="GO:0005654">
    <property type="term" value="C:nucleoplasm"/>
    <property type="evidence" value="ECO:0007669"/>
    <property type="project" value="Ensembl"/>
</dbReference>
<dbReference type="GO" id="GO:0005634">
    <property type="term" value="C:nucleus"/>
    <property type="evidence" value="ECO:0000314"/>
    <property type="project" value="MGI"/>
</dbReference>
<dbReference type="GO" id="GO:0005667">
    <property type="term" value="C:transcription regulator complex"/>
    <property type="evidence" value="ECO:0000353"/>
    <property type="project" value="MGI"/>
</dbReference>
<dbReference type="GO" id="GO:0042802">
    <property type="term" value="F:identical protein binding"/>
    <property type="evidence" value="ECO:0007669"/>
    <property type="project" value="Ensembl"/>
</dbReference>
<dbReference type="GO" id="GO:0046872">
    <property type="term" value="F:metal ion binding"/>
    <property type="evidence" value="ECO:0007669"/>
    <property type="project" value="UniProtKB-KW"/>
</dbReference>
<dbReference type="GO" id="GO:0036139">
    <property type="term" value="F:peptidyl-histidine dioxygenase activity"/>
    <property type="evidence" value="ECO:0007669"/>
    <property type="project" value="Ensembl"/>
</dbReference>
<dbReference type="GO" id="GO:0003714">
    <property type="term" value="F:transcription corepressor activity"/>
    <property type="evidence" value="ECO:0000316"/>
    <property type="project" value="MGI"/>
</dbReference>
<dbReference type="GO" id="GO:0042127">
    <property type="term" value="P:regulation of cell population proliferation"/>
    <property type="evidence" value="ECO:0000266"/>
    <property type="project" value="MGI"/>
</dbReference>
<dbReference type="GO" id="GO:0042254">
    <property type="term" value="P:ribosome biogenesis"/>
    <property type="evidence" value="ECO:0007669"/>
    <property type="project" value="UniProtKB-KW"/>
</dbReference>
<dbReference type="Gene3D" id="3.90.930.40">
    <property type="match status" value="1"/>
</dbReference>
<dbReference type="Gene3D" id="2.60.120.650">
    <property type="entry name" value="Cupin"/>
    <property type="match status" value="1"/>
</dbReference>
<dbReference type="Gene3D" id="1.10.10.1500">
    <property type="entry name" value="JmjC domain-containing ribosomal oxygenase (ROX), dimer domain"/>
    <property type="match status" value="1"/>
</dbReference>
<dbReference type="InterPro" id="IPR003347">
    <property type="entry name" value="JmjC_dom"/>
</dbReference>
<dbReference type="InterPro" id="IPR039994">
    <property type="entry name" value="NO66-like"/>
</dbReference>
<dbReference type="InterPro" id="IPR046799">
    <property type="entry name" value="ROXA-like_wH"/>
</dbReference>
<dbReference type="PANTHER" id="PTHR13096">
    <property type="entry name" value="MINA53 MYC INDUCED NUCLEAR ANTIGEN"/>
    <property type="match status" value="1"/>
</dbReference>
<dbReference type="PANTHER" id="PTHR13096:SF7">
    <property type="entry name" value="RIBOSOMAL OXYGENASE 2"/>
    <property type="match status" value="1"/>
</dbReference>
<dbReference type="Pfam" id="PF08007">
    <property type="entry name" value="JmjC_2"/>
    <property type="match status" value="1"/>
</dbReference>
<dbReference type="Pfam" id="PF20514">
    <property type="entry name" value="ROXA-like_wH"/>
    <property type="match status" value="1"/>
</dbReference>
<dbReference type="SUPFAM" id="SSF51197">
    <property type="entry name" value="Clavaminate synthase-like"/>
    <property type="match status" value="1"/>
</dbReference>
<dbReference type="PROSITE" id="PS51184">
    <property type="entry name" value="JMJC"/>
    <property type="match status" value="1"/>
</dbReference>
<evidence type="ECO:0000250" key="1"/>
<evidence type="ECO:0000250" key="2">
    <source>
        <dbReference type="UniProtKB" id="Q8IUF8"/>
    </source>
</evidence>
<evidence type="ECO:0000255" key="3">
    <source>
        <dbReference type="PROSITE-ProRule" id="PRU00538"/>
    </source>
</evidence>
<evidence type="ECO:0000269" key="4">
    <source>
    </source>
</evidence>
<evidence type="ECO:0000303" key="5">
    <source>
    </source>
</evidence>
<evidence type="ECO:0000305" key="6"/>
<evidence type="ECO:0000312" key="7">
    <source>
        <dbReference type="EMBL" id="AAH23462.1"/>
    </source>
</evidence>
<evidence type="ECO:0000312" key="8">
    <source>
        <dbReference type="EMBL" id="AAH58242.1"/>
    </source>
</evidence>
<evidence type="ECO:0000312" key="9">
    <source>
        <dbReference type="EMBL" id="BAB25275.1"/>
    </source>
</evidence>
<evidence type="ECO:0000312" key="10">
    <source>
        <dbReference type="EMBL" id="BAB28860.1"/>
    </source>
</evidence>
<evidence type="ECO:0000312" key="11">
    <source>
        <dbReference type="EMBL" id="BAC27503.1"/>
    </source>
</evidence>
<evidence type="ECO:0000312" key="12">
    <source>
        <dbReference type="EMBL" id="BAD60965.1"/>
    </source>
</evidence>
<evidence type="ECO:0000312" key="13">
    <source>
        <dbReference type="MGI" id="MGI:1914264"/>
    </source>
</evidence>
<accession>Q8CD15</accession>
<accession>Q8QZX1</accession>
<accession>Q9CQ03</accession>
<feature type="chain" id="PRO_0000308378" description="Ribosomal oxygenase 2">
    <location>
        <begin position="1"/>
        <end position="465"/>
    </location>
</feature>
<feature type="domain" description="JmjC" evidence="3">
    <location>
        <begin position="139"/>
        <end position="271"/>
    </location>
</feature>
<feature type="binding site" evidence="3">
    <location>
        <position position="179"/>
    </location>
    <ligand>
        <name>Fe cation</name>
        <dbReference type="ChEBI" id="CHEBI:24875"/>
        <note>catalytic</note>
    </ligand>
</feature>
<feature type="binding site" evidence="3">
    <location>
        <position position="181"/>
    </location>
    <ligand>
        <name>Fe cation</name>
        <dbReference type="ChEBI" id="CHEBI:24875"/>
        <note>catalytic</note>
    </ligand>
</feature>
<feature type="binding site" evidence="3">
    <location>
        <position position="240"/>
    </location>
    <ligand>
        <name>Fe cation</name>
        <dbReference type="ChEBI" id="CHEBI:24875"/>
        <note>catalytic</note>
    </ligand>
</feature>
<feature type="modified residue" description="Phosphoserine" evidence="2">
    <location>
        <position position="309"/>
    </location>
</feature>
<feature type="sequence conflict" description="In Ref. 3; AAH25109/AAH23462." evidence="6" ref="3">
    <original>A</original>
    <variation>E</variation>
    <location>
        <position position="15"/>
    </location>
</feature>
<feature type="sequence conflict" description="In Ref. 2; BAC27503." evidence="6" ref="2">
    <original>S</original>
    <variation>N</variation>
    <location>
        <position position="107"/>
    </location>
</feature>
<feature type="sequence conflict" description="In Ref. 3; AAH25109/AAH23462." evidence="6" ref="3">
    <original>D</original>
    <variation>E</variation>
    <location>
        <position position="440"/>
    </location>
</feature>
<gene>
    <name evidence="13" type="primary">Riox2</name>
    <name type="synonym">Mina</name>
    <name evidence="5" type="synonym">Mina53</name>
</gene>
<keyword id="KW-0223">Dioxygenase</keyword>
<keyword id="KW-0408">Iron</keyword>
<keyword id="KW-0479">Metal-binding</keyword>
<keyword id="KW-0539">Nucleus</keyword>
<keyword id="KW-0560">Oxidoreductase</keyword>
<keyword id="KW-0597">Phosphoprotein</keyword>
<keyword id="KW-1185">Reference proteome</keyword>
<keyword id="KW-0690">Ribosome biogenesis</keyword>
<keyword id="KW-0804">Transcription</keyword>
<keyword id="KW-0805">Transcription regulation</keyword>
<protein>
    <recommendedName>
        <fullName evidence="13">Ribosomal oxygenase 2</fullName>
    </recommendedName>
    <alternativeName>
        <fullName>Bifunctional lysine-specific demethylase and histidyl-hydroxylase MINA</fullName>
        <ecNumber evidence="2">1.14.11.79</ecNumber>
    </alternativeName>
    <alternativeName>
        <fullName>Histone lysine demethylase MINA</fullName>
    </alternativeName>
    <alternativeName>
        <fullName>MYC-induced nuclear antigen</fullName>
    </alternativeName>
</protein>
<reference evidence="6 12" key="1">
    <citation type="journal article" date="2006" name="Int. J. Androl.">
        <title>Expression of Mina53, a product of a Myc target gene in mouse testis.</title>
        <authorList>
            <person name="Tsuneoka M."/>
            <person name="Nishimune Y."/>
            <person name="Ohta K."/>
            <person name="Teye K."/>
            <person name="Tanaka H."/>
            <person name="Soejima M."/>
            <person name="Iida H."/>
            <person name="Inokuchi T."/>
            <person name="Kimura H."/>
            <person name="Koda Y."/>
        </authorList>
    </citation>
    <scope>NUCLEOTIDE SEQUENCE [MRNA]</scope>
    <scope>FUNCTION</scope>
    <scope>SUBCELLULAR LOCATION</scope>
    <scope>TISSUE SPECIFICITY</scope>
    <scope>DEVELOPMENTAL STAGE</scope>
    <scope>INDUCTION</scope>
    <source>
        <tissue evidence="12">Stomach</tissue>
    </source>
</reference>
<reference evidence="11" key="2">
    <citation type="journal article" date="2005" name="Science">
        <title>The transcriptional landscape of the mammalian genome.</title>
        <authorList>
            <person name="Carninci P."/>
            <person name="Kasukawa T."/>
            <person name="Katayama S."/>
            <person name="Gough J."/>
            <person name="Frith M.C."/>
            <person name="Maeda N."/>
            <person name="Oyama R."/>
            <person name="Ravasi T."/>
            <person name="Lenhard B."/>
            <person name="Wells C."/>
            <person name="Kodzius R."/>
            <person name="Shimokawa K."/>
            <person name="Bajic V.B."/>
            <person name="Brenner S.E."/>
            <person name="Batalov S."/>
            <person name="Forrest A.R."/>
            <person name="Zavolan M."/>
            <person name="Davis M.J."/>
            <person name="Wilming L.G."/>
            <person name="Aidinis V."/>
            <person name="Allen J.E."/>
            <person name="Ambesi-Impiombato A."/>
            <person name="Apweiler R."/>
            <person name="Aturaliya R.N."/>
            <person name="Bailey T.L."/>
            <person name="Bansal M."/>
            <person name="Baxter L."/>
            <person name="Beisel K.W."/>
            <person name="Bersano T."/>
            <person name="Bono H."/>
            <person name="Chalk A.M."/>
            <person name="Chiu K.P."/>
            <person name="Choudhary V."/>
            <person name="Christoffels A."/>
            <person name="Clutterbuck D.R."/>
            <person name="Crowe M.L."/>
            <person name="Dalla E."/>
            <person name="Dalrymple B.P."/>
            <person name="de Bono B."/>
            <person name="Della Gatta G."/>
            <person name="di Bernardo D."/>
            <person name="Down T."/>
            <person name="Engstrom P."/>
            <person name="Fagiolini M."/>
            <person name="Faulkner G."/>
            <person name="Fletcher C.F."/>
            <person name="Fukushima T."/>
            <person name="Furuno M."/>
            <person name="Futaki S."/>
            <person name="Gariboldi M."/>
            <person name="Georgii-Hemming P."/>
            <person name="Gingeras T.R."/>
            <person name="Gojobori T."/>
            <person name="Green R.E."/>
            <person name="Gustincich S."/>
            <person name="Harbers M."/>
            <person name="Hayashi Y."/>
            <person name="Hensch T.K."/>
            <person name="Hirokawa N."/>
            <person name="Hill D."/>
            <person name="Huminiecki L."/>
            <person name="Iacono M."/>
            <person name="Ikeo K."/>
            <person name="Iwama A."/>
            <person name="Ishikawa T."/>
            <person name="Jakt M."/>
            <person name="Kanapin A."/>
            <person name="Katoh M."/>
            <person name="Kawasawa Y."/>
            <person name="Kelso J."/>
            <person name="Kitamura H."/>
            <person name="Kitano H."/>
            <person name="Kollias G."/>
            <person name="Krishnan S.P."/>
            <person name="Kruger A."/>
            <person name="Kummerfeld S.K."/>
            <person name="Kurochkin I.V."/>
            <person name="Lareau L.F."/>
            <person name="Lazarevic D."/>
            <person name="Lipovich L."/>
            <person name="Liu J."/>
            <person name="Liuni S."/>
            <person name="McWilliam S."/>
            <person name="Madan Babu M."/>
            <person name="Madera M."/>
            <person name="Marchionni L."/>
            <person name="Matsuda H."/>
            <person name="Matsuzawa S."/>
            <person name="Miki H."/>
            <person name="Mignone F."/>
            <person name="Miyake S."/>
            <person name="Morris K."/>
            <person name="Mottagui-Tabar S."/>
            <person name="Mulder N."/>
            <person name="Nakano N."/>
            <person name="Nakauchi H."/>
            <person name="Ng P."/>
            <person name="Nilsson R."/>
            <person name="Nishiguchi S."/>
            <person name="Nishikawa S."/>
            <person name="Nori F."/>
            <person name="Ohara O."/>
            <person name="Okazaki Y."/>
            <person name="Orlando V."/>
            <person name="Pang K.C."/>
            <person name="Pavan W.J."/>
            <person name="Pavesi G."/>
            <person name="Pesole G."/>
            <person name="Petrovsky N."/>
            <person name="Piazza S."/>
            <person name="Reed J."/>
            <person name="Reid J.F."/>
            <person name="Ring B.Z."/>
            <person name="Ringwald M."/>
            <person name="Rost B."/>
            <person name="Ruan Y."/>
            <person name="Salzberg S.L."/>
            <person name="Sandelin A."/>
            <person name="Schneider C."/>
            <person name="Schoenbach C."/>
            <person name="Sekiguchi K."/>
            <person name="Semple C.A."/>
            <person name="Seno S."/>
            <person name="Sessa L."/>
            <person name="Sheng Y."/>
            <person name="Shibata Y."/>
            <person name="Shimada H."/>
            <person name="Shimada K."/>
            <person name="Silva D."/>
            <person name="Sinclair B."/>
            <person name="Sperling S."/>
            <person name="Stupka E."/>
            <person name="Sugiura K."/>
            <person name="Sultana R."/>
            <person name="Takenaka Y."/>
            <person name="Taki K."/>
            <person name="Tammoja K."/>
            <person name="Tan S.L."/>
            <person name="Tang S."/>
            <person name="Taylor M.S."/>
            <person name="Tegner J."/>
            <person name="Teichmann S.A."/>
            <person name="Ueda H.R."/>
            <person name="van Nimwegen E."/>
            <person name="Verardo R."/>
            <person name="Wei C.L."/>
            <person name="Yagi K."/>
            <person name="Yamanishi H."/>
            <person name="Zabarovsky E."/>
            <person name="Zhu S."/>
            <person name="Zimmer A."/>
            <person name="Hide W."/>
            <person name="Bult C."/>
            <person name="Grimmond S.M."/>
            <person name="Teasdale R.D."/>
            <person name="Liu E.T."/>
            <person name="Brusic V."/>
            <person name="Quackenbush J."/>
            <person name="Wahlestedt C."/>
            <person name="Mattick J.S."/>
            <person name="Hume D.A."/>
            <person name="Kai C."/>
            <person name="Sasaki D."/>
            <person name="Tomaru Y."/>
            <person name="Fukuda S."/>
            <person name="Kanamori-Katayama M."/>
            <person name="Suzuki M."/>
            <person name="Aoki J."/>
            <person name="Arakawa T."/>
            <person name="Iida J."/>
            <person name="Imamura K."/>
            <person name="Itoh M."/>
            <person name="Kato T."/>
            <person name="Kawaji H."/>
            <person name="Kawagashira N."/>
            <person name="Kawashima T."/>
            <person name="Kojima M."/>
            <person name="Kondo S."/>
            <person name="Konno H."/>
            <person name="Nakano K."/>
            <person name="Ninomiya N."/>
            <person name="Nishio T."/>
            <person name="Okada M."/>
            <person name="Plessy C."/>
            <person name="Shibata K."/>
            <person name="Shiraki T."/>
            <person name="Suzuki S."/>
            <person name="Tagami M."/>
            <person name="Waki K."/>
            <person name="Watahiki A."/>
            <person name="Okamura-Oho Y."/>
            <person name="Suzuki H."/>
            <person name="Kawai J."/>
            <person name="Hayashizaki Y."/>
        </authorList>
    </citation>
    <scope>NUCLEOTIDE SEQUENCE [LARGE SCALE MRNA]</scope>
    <source>
        <strain evidence="11">C57BL/6J</strain>
        <tissue evidence="10">Embryo</tissue>
        <tissue evidence="11">Embryonic testis</tissue>
        <tissue evidence="9">Pancreas</tissue>
    </source>
</reference>
<reference evidence="7" key="3">
    <citation type="journal article" date="2004" name="Genome Res.">
        <title>The status, quality, and expansion of the NIH full-length cDNA project: the Mammalian Gene Collection (MGC).</title>
        <authorList>
            <consortium name="The MGC Project Team"/>
        </authorList>
    </citation>
    <scope>NUCLEOTIDE SEQUENCE [LARGE SCALE MRNA]</scope>
    <source>
        <strain evidence="8">C57BL/6J</strain>
        <strain evidence="7">FVB/N</strain>
        <tissue evidence="7">Kidney</tissue>
        <tissue evidence="8">Olfactory epithelium</tissue>
    </source>
</reference>